<accession>O22621</accession>
<dbReference type="EMBL" id="AF030171">
    <property type="protein sequence ID" value="AAC49912.1"/>
    <property type="molecule type" value="mRNA"/>
</dbReference>
<dbReference type="SMR" id="O22621"/>
<dbReference type="GO" id="GO:0005634">
    <property type="term" value="C:nucleus"/>
    <property type="evidence" value="ECO:0007669"/>
    <property type="project" value="UniProtKB-SubCell"/>
</dbReference>
<dbReference type="GO" id="GO:0003677">
    <property type="term" value="F:DNA binding"/>
    <property type="evidence" value="ECO:0007669"/>
    <property type="project" value="UniProtKB-KW"/>
</dbReference>
<dbReference type="GO" id="GO:0006355">
    <property type="term" value="P:regulation of DNA-templated transcription"/>
    <property type="evidence" value="ECO:0007669"/>
    <property type="project" value="InterPro"/>
</dbReference>
<dbReference type="Gene3D" id="1.10.4180.10">
    <property type="entry name" value="Protein LEAFY"/>
    <property type="match status" value="1"/>
</dbReference>
<dbReference type="InterPro" id="IPR035209">
    <property type="entry name" value="FLO/LFY_C"/>
</dbReference>
<dbReference type="InterPro" id="IPR002910">
    <property type="entry name" value="FLO_LFY"/>
</dbReference>
<dbReference type="InterPro" id="IPR038276">
    <property type="entry name" value="Floricaula/leafy_C_sf"/>
</dbReference>
<dbReference type="InterPro" id="IPR035079">
    <property type="entry name" value="LFY_SAM"/>
</dbReference>
<dbReference type="PANTHER" id="PTHR36079">
    <property type="entry name" value="PROTEIN LEAFY"/>
    <property type="match status" value="1"/>
</dbReference>
<dbReference type="PANTHER" id="PTHR36079:SF1">
    <property type="entry name" value="PROTEIN LEAFY"/>
    <property type="match status" value="1"/>
</dbReference>
<dbReference type="Pfam" id="PF17538">
    <property type="entry name" value="C_LFY_FLO"/>
    <property type="match status" value="1"/>
</dbReference>
<dbReference type="Pfam" id="PF01698">
    <property type="entry name" value="SAM_LFY"/>
    <property type="match status" value="1"/>
</dbReference>
<gene>
    <name type="primary">ALF</name>
</gene>
<reference key="1">
    <citation type="journal article" date="1998" name="Development">
        <title>Genetic control of branching pattern and floral identity during Petunia inflorescence development.</title>
        <authorList>
            <person name="Souer E."/>
            <person name="van der Krol A."/>
            <person name="Kloos D."/>
            <person name="Spelt C."/>
            <person name="Bliek M."/>
            <person name="Mol J."/>
            <person name="Koes R."/>
        </authorList>
    </citation>
    <scope>NUCLEOTIDE SEQUENCE [MRNA]</scope>
    <source>
        <strain>cv. W138</strain>
    </source>
</reference>
<evidence type="ECO:0000250" key="1"/>
<evidence type="ECO:0000256" key="2">
    <source>
        <dbReference type="SAM" id="MobiDB-lite"/>
    </source>
</evidence>
<evidence type="ECO:0000305" key="3"/>
<protein>
    <recommendedName>
        <fullName>Protein ALF</fullName>
    </recommendedName>
    <alternativeName>
        <fullName>Aberrant leaf and flower protein</fullName>
    </alternativeName>
</protein>
<feature type="chain" id="PRO_0000129152" description="Protein ALF">
    <location>
        <begin position="1"/>
        <end position="412"/>
    </location>
</feature>
<feature type="DNA-binding region" evidence="1">
    <location>
        <begin position="237"/>
        <end position="241"/>
    </location>
</feature>
<feature type="DNA-binding region" evidence="1">
    <location>
        <begin position="306"/>
        <end position="313"/>
    </location>
</feature>
<feature type="DNA-binding region" evidence="1">
    <location>
        <begin position="377"/>
        <end position="380"/>
    </location>
</feature>
<feature type="region of interest" description="Disordered" evidence="2">
    <location>
        <begin position="1"/>
        <end position="47"/>
    </location>
</feature>
<feature type="region of interest" description="Disordered" evidence="2">
    <location>
        <begin position="154"/>
        <end position="234"/>
    </location>
</feature>
<feature type="compositionally biased region" description="Pro residues" evidence="2">
    <location>
        <begin position="31"/>
        <end position="47"/>
    </location>
</feature>
<feature type="compositionally biased region" description="Basic residues" evidence="2">
    <location>
        <begin position="187"/>
        <end position="196"/>
    </location>
</feature>
<feature type="compositionally biased region" description="Acidic residues" evidence="2">
    <location>
        <begin position="206"/>
        <end position="221"/>
    </location>
</feature>
<feature type="site" description="Interaction with DNA" evidence="1">
    <location>
        <position position="284"/>
    </location>
</feature>
<feature type="site" description="Interaction with DNA" evidence="1">
    <location>
        <position position="291"/>
    </location>
</feature>
<feature type="site" description="Interaction with DNA" evidence="1">
    <location>
        <position position="295"/>
    </location>
</feature>
<feature type="site" description="Interaction with DNA" evidence="1">
    <location>
        <position position="342"/>
    </location>
</feature>
<sequence length="412" mass="46268">MDPEAFSASLFKWDPRGAMPPPNRLLEAVAPPQPPPPPLPPPQPLPPAYSIRTRELGGLEEMFQAYGIRYYTAAKITELGFTVNTLLDMKDDELDDMMNSLSQIFRWELLVGERYGIKAAIRAERRRLEEEEGRRRHILSDGGTNVLDALSQEGLSEEPVQQQEREAAGSGGGGTAWEVVAPGGGRMRQRRRKKVVVGRERRGSSMEEDEDTEEGQEDNEDYNINNEGGGGISERQREHPFIVTEPGEVARGKKNGLDYLFHLYEQCRDFLIQVQNIAKERGEKCPTKVTNQVFRFAKKAGASYINKPKMRHYVHCYALHCLDEDASNALRRAFKERGENVGAWRQACYKPLVAIAARQGWDIDAIFNGHPRLSIWYVPTKLRQLCHSERSNAAAAASTSVSGGGVDHLPHF</sequence>
<keyword id="KW-0010">Activator</keyword>
<keyword id="KW-0217">Developmental protein</keyword>
<keyword id="KW-0238">DNA-binding</keyword>
<keyword id="KW-0539">Nucleus</keyword>
<keyword id="KW-0804">Transcription</keyword>
<keyword id="KW-0805">Transcription regulation</keyword>
<organism>
    <name type="scientific">Petunia hybrida</name>
    <name type="common">Petunia</name>
    <dbReference type="NCBI Taxonomy" id="4102"/>
    <lineage>
        <taxon>Eukaryota</taxon>
        <taxon>Viridiplantae</taxon>
        <taxon>Streptophyta</taxon>
        <taxon>Embryophyta</taxon>
        <taxon>Tracheophyta</taxon>
        <taxon>Spermatophyta</taxon>
        <taxon>Magnoliopsida</taxon>
        <taxon>eudicotyledons</taxon>
        <taxon>Gunneridae</taxon>
        <taxon>Pentapetalae</taxon>
        <taxon>asterids</taxon>
        <taxon>lamiids</taxon>
        <taxon>Solanales</taxon>
        <taxon>Solanaceae</taxon>
        <taxon>Petunioideae</taxon>
        <taxon>Petunia</taxon>
    </lineage>
</organism>
<proteinExistence type="evidence at transcript level"/>
<comment type="function">
    <text>Probable transcription factor required for the specification of floral meristem identity.</text>
</comment>
<comment type="subcellular location">
    <subcellularLocation>
        <location evidence="3">Nucleus</location>
    </subcellularLocation>
</comment>
<comment type="tissue specificity">
    <text>Expressed in the floral meristem and also in the vegetative meristem.</text>
</comment>
<comment type="similarity">
    <text evidence="3">Belongs to the FLO/LFY family.</text>
</comment>
<name>ALF_PETHY</name>